<name>VAPB3_PYRAE</name>
<keyword id="KW-0175">Coiled coil</keyword>
<keyword id="KW-1185">Reference proteome</keyword>
<keyword id="KW-1277">Toxin-antitoxin system</keyword>
<sequence length="77" mass="9120">MSEVISIRVRRGLKKELEELGINYAEAVRKFLEELVARERRRRALERARALREELRKKGAFPPSAELIREDRDEASR</sequence>
<protein>
    <recommendedName>
        <fullName>Putative antitoxin VapB3</fullName>
    </recommendedName>
</protein>
<comment type="function">
    <text evidence="3">Antitoxin component of a type II toxin-antitoxin (TA) system.</text>
</comment>
<comment type="subunit">
    <text evidence="2">Forms a complex with putative toxin VapC3, possibly VapB(2)-VapC(2).</text>
</comment>
<reference key="1">
    <citation type="journal article" date="2002" name="Proc. Natl. Acad. Sci. U.S.A.">
        <title>Genome sequence of the hyperthermophilic crenarchaeon Pyrobaculum aerophilum.</title>
        <authorList>
            <person name="Fitz-Gibbon S.T."/>
            <person name="Ladner H."/>
            <person name="Kim U.-J."/>
            <person name="Stetter K.O."/>
            <person name="Simon M.I."/>
            <person name="Miller J.H."/>
        </authorList>
    </citation>
    <scope>NUCLEOTIDE SEQUENCE [LARGE SCALE GENOMIC DNA]</scope>
    <source>
        <strain>ATCC 51768 / DSM 7523 / JCM 9630 / CIP 104966 / NBRC 100827 / IM2</strain>
    </source>
</reference>
<reference key="2">
    <citation type="journal article" date="2005" name="Nucleic Acids Res.">
        <title>Toxin-antitoxin loci are highly abundant in free-living but lost from host-associated prokaryotes.</title>
        <authorList>
            <person name="Pandey D.P."/>
            <person name="Gerdes K."/>
        </authorList>
    </citation>
    <scope>POSSIBLE FUNCTION</scope>
    <source>
        <strain>ATCC 51768 / DSM 7523 / JCM 9630 / CIP 104966 / NBRC 100827 / IM2</strain>
    </source>
</reference>
<reference key="3">
    <citation type="journal article" date="2008" name="Proteins">
        <title>Crystal structure of PAE0151 from Pyrobaculum aerophilum, a PIN-domain (VapC) protein from a toxin-antitoxin operon.</title>
        <authorList>
            <person name="Bunker R.D."/>
            <person name="McKenzie J.L."/>
            <person name="Baker E.N."/>
            <person name="Arcus V.L."/>
        </authorList>
    </citation>
    <scope>SUBUNIT</scope>
    <source>
        <strain>ATCC 51768 / DSM 7523 / JCM 9630 / CIP 104966 / NBRC 100827 / IM2</strain>
    </source>
</reference>
<proteinExistence type="evidence at protein level"/>
<organism>
    <name type="scientific">Pyrobaculum aerophilum (strain ATCC 51768 / DSM 7523 / JCM 9630 / CIP 104966 / NBRC 100827 / IM2)</name>
    <dbReference type="NCBI Taxonomy" id="178306"/>
    <lineage>
        <taxon>Archaea</taxon>
        <taxon>Thermoproteota</taxon>
        <taxon>Thermoprotei</taxon>
        <taxon>Thermoproteales</taxon>
        <taxon>Thermoproteaceae</taxon>
        <taxon>Pyrobaculum</taxon>
    </lineage>
</organism>
<evidence type="ECO:0000255" key="1"/>
<evidence type="ECO:0000269" key="2">
    <source>
    </source>
</evidence>
<evidence type="ECO:0000305" key="3"/>
<feature type="chain" id="PRO_0000408090" description="Putative antitoxin VapB3">
    <location>
        <begin position="1"/>
        <end position="77"/>
    </location>
</feature>
<feature type="coiled-coil region" evidence="1">
    <location>
        <begin position="10"/>
        <end position="60"/>
    </location>
</feature>
<gene>
    <name type="primary">vAPb3</name>
    <name type="ordered locus">PAE0152</name>
</gene>
<accession>Q8ZZP2</accession>
<dbReference type="EMBL" id="AE009441">
    <property type="protein sequence ID" value="AAL62597.1"/>
    <property type="molecule type" value="Genomic_DNA"/>
</dbReference>
<dbReference type="RefSeq" id="WP_011007069.1">
    <property type="nucleotide sequence ID" value="NC_003364.1"/>
</dbReference>
<dbReference type="SMR" id="Q8ZZP2"/>
<dbReference type="STRING" id="178306.PAE0152"/>
<dbReference type="EnsemblBacteria" id="AAL62597">
    <property type="protein sequence ID" value="AAL62597"/>
    <property type="gene ID" value="PAE0152"/>
</dbReference>
<dbReference type="GeneID" id="1464813"/>
<dbReference type="KEGG" id="pai:PAE0152"/>
<dbReference type="PATRIC" id="fig|178306.9.peg.109"/>
<dbReference type="eggNOG" id="arCOG02218">
    <property type="taxonomic scope" value="Archaea"/>
</dbReference>
<dbReference type="HOGENOM" id="CLU_175270_2_0_2"/>
<dbReference type="InParanoid" id="Q8ZZP2"/>
<dbReference type="Proteomes" id="UP000002439">
    <property type="component" value="Chromosome"/>
</dbReference>
<dbReference type="InterPro" id="IPR039709">
    <property type="entry name" value="VapB3-like"/>
</dbReference>
<dbReference type="PANTHER" id="PTHR42244">
    <property type="entry name" value="ANTITOXIN VAPB3-RELATED"/>
    <property type="match status" value="1"/>
</dbReference>
<dbReference type="PANTHER" id="PTHR42244:SF2">
    <property type="entry name" value="ANTITOXIN VAPB3-RELATED"/>
    <property type="match status" value="1"/>
</dbReference>